<sequence length="281" mass="29633">MKRVAIFGHPVIHSRSPLVHGYWLKQHGIAGDYVRHDVAPDEAEAFFARFAEQGYAGGNVTIPHKEVAFNALAEADPVARALGVANTLWLEDGRLFGANTDAPGFLSNLDVTAPGWDANPRVALVLGAGGASRAVLYGFLQRGFDKVLLANRTLARAEALAAHFGPRVVPIGWDGVSASLKEAQVVANTTSLGMKGQPPLDLDLSVLADDAVVADVVYVPLETPLLKAAKARGLRTVDGLGMLLHQAVPGFARWFGVTPQVDAGLRDLIVADLAAKGQLGA</sequence>
<keyword id="KW-0028">Amino-acid biosynthesis</keyword>
<keyword id="KW-0057">Aromatic amino acid biosynthesis</keyword>
<keyword id="KW-0521">NADP</keyword>
<keyword id="KW-0560">Oxidoreductase</keyword>
<keyword id="KW-1185">Reference proteome</keyword>
<evidence type="ECO:0000255" key="1">
    <source>
        <dbReference type="HAMAP-Rule" id="MF_00222"/>
    </source>
</evidence>
<proteinExistence type="inferred from homology"/>
<comment type="function">
    <text evidence="1">Involved in the biosynthesis of the chorismate, which leads to the biosynthesis of aromatic amino acids. Catalyzes the reversible NADPH linked reduction of 3-dehydroshikimate (DHSA) to yield shikimate (SA).</text>
</comment>
<comment type="catalytic activity">
    <reaction evidence="1">
        <text>shikimate + NADP(+) = 3-dehydroshikimate + NADPH + H(+)</text>
        <dbReference type="Rhea" id="RHEA:17737"/>
        <dbReference type="ChEBI" id="CHEBI:15378"/>
        <dbReference type="ChEBI" id="CHEBI:16630"/>
        <dbReference type="ChEBI" id="CHEBI:36208"/>
        <dbReference type="ChEBI" id="CHEBI:57783"/>
        <dbReference type="ChEBI" id="CHEBI:58349"/>
        <dbReference type="EC" id="1.1.1.25"/>
    </reaction>
</comment>
<comment type="pathway">
    <text evidence="1">Metabolic intermediate biosynthesis; chorismate biosynthesis; chorismate from D-erythrose 4-phosphate and phosphoenolpyruvate: step 4/7.</text>
</comment>
<comment type="subunit">
    <text evidence="1">Homodimer.</text>
</comment>
<comment type="similarity">
    <text evidence="1">Belongs to the shikimate dehydrogenase family.</text>
</comment>
<reference key="1">
    <citation type="submission" date="2007-04" db="EMBL/GenBank/DDBJ databases">
        <title>Complete genome sequence of the nitrogen-fixing bacterium Azorhizobium caulinodans ORS571.</title>
        <authorList>
            <person name="Lee K.B."/>
            <person name="Backer P.D."/>
            <person name="Aono T."/>
            <person name="Liu C.T."/>
            <person name="Suzuki S."/>
            <person name="Suzuki T."/>
            <person name="Kaneko T."/>
            <person name="Yamada M."/>
            <person name="Tabata S."/>
            <person name="Kupfer D.M."/>
            <person name="Najar F.Z."/>
            <person name="Wiley G.B."/>
            <person name="Roe B."/>
            <person name="Binnewies T."/>
            <person name="Ussery D."/>
            <person name="Vereecke D."/>
            <person name="Gevers D."/>
            <person name="Holsters M."/>
            <person name="Oyaizu H."/>
        </authorList>
    </citation>
    <scope>NUCLEOTIDE SEQUENCE [LARGE SCALE GENOMIC DNA]</scope>
    <source>
        <strain>ATCC 43989 / DSM 5975 / JCM 20966 / LMG 6465 / NBRC 14845 / NCIMB 13405 / ORS 571</strain>
    </source>
</reference>
<protein>
    <recommendedName>
        <fullName evidence="1">Shikimate dehydrogenase (NADP(+))</fullName>
        <shortName evidence="1">SDH</shortName>
        <ecNumber evidence="1">1.1.1.25</ecNumber>
    </recommendedName>
</protein>
<feature type="chain" id="PRO_0000325101" description="Shikimate dehydrogenase (NADP(+))">
    <location>
        <begin position="1"/>
        <end position="281"/>
    </location>
</feature>
<feature type="active site" description="Proton acceptor" evidence="1">
    <location>
        <position position="65"/>
    </location>
</feature>
<feature type="binding site" evidence="1">
    <location>
        <begin position="14"/>
        <end position="16"/>
    </location>
    <ligand>
        <name>shikimate</name>
        <dbReference type="ChEBI" id="CHEBI:36208"/>
    </ligand>
</feature>
<feature type="binding site" evidence="1">
    <location>
        <position position="61"/>
    </location>
    <ligand>
        <name>shikimate</name>
        <dbReference type="ChEBI" id="CHEBI:36208"/>
    </ligand>
</feature>
<feature type="binding site" evidence="1">
    <location>
        <position position="86"/>
    </location>
    <ligand>
        <name>shikimate</name>
        <dbReference type="ChEBI" id="CHEBI:36208"/>
    </ligand>
</feature>
<feature type="binding site" evidence="1">
    <location>
        <position position="101"/>
    </location>
    <ligand>
        <name>shikimate</name>
        <dbReference type="ChEBI" id="CHEBI:36208"/>
    </ligand>
</feature>
<feature type="binding site" evidence="1">
    <location>
        <begin position="127"/>
        <end position="131"/>
    </location>
    <ligand>
        <name>NADP(+)</name>
        <dbReference type="ChEBI" id="CHEBI:58349"/>
    </ligand>
</feature>
<feature type="binding site" evidence="1">
    <location>
        <begin position="151"/>
        <end position="156"/>
    </location>
    <ligand>
        <name>NADP(+)</name>
        <dbReference type="ChEBI" id="CHEBI:58349"/>
    </ligand>
</feature>
<feature type="binding site" evidence="1">
    <location>
        <position position="216"/>
    </location>
    <ligand>
        <name>NADP(+)</name>
        <dbReference type="ChEBI" id="CHEBI:58349"/>
    </ligand>
</feature>
<feature type="binding site" evidence="1">
    <location>
        <position position="218"/>
    </location>
    <ligand>
        <name>shikimate</name>
        <dbReference type="ChEBI" id="CHEBI:36208"/>
    </ligand>
</feature>
<feature type="binding site" evidence="1">
    <location>
        <position position="239"/>
    </location>
    <ligand>
        <name>NADP(+)</name>
        <dbReference type="ChEBI" id="CHEBI:58349"/>
    </ligand>
</feature>
<dbReference type="EC" id="1.1.1.25" evidence="1"/>
<dbReference type="EMBL" id="AP009384">
    <property type="protein sequence ID" value="BAF86001.1"/>
    <property type="molecule type" value="Genomic_DNA"/>
</dbReference>
<dbReference type="SMR" id="A8IFY6"/>
<dbReference type="STRING" id="438753.AZC_0003"/>
<dbReference type="KEGG" id="azc:AZC_0003"/>
<dbReference type="eggNOG" id="COG0169">
    <property type="taxonomic scope" value="Bacteria"/>
</dbReference>
<dbReference type="HOGENOM" id="CLU_044063_2_0_5"/>
<dbReference type="UniPathway" id="UPA00053">
    <property type="reaction ID" value="UER00087"/>
</dbReference>
<dbReference type="Proteomes" id="UP000000270">
    <property type="component" value="Chromosome"/>
</dbReference>
<dbReference type="GO" id="GO:0005829">
    <property type="term" value="C:cytosol"/>
    <property type="evidence" value="ECO:0007669"/>
    <property type="project" value="TreeGrafter"/>
</dbReference>
<dbReference type="GO" id="GO:0050661">
    <property type="term" value="F:NADP binding"/>
    <property type="evidence" value="ECO:0007669"/>
    <property type="project" value="InterPro"/>
</dbReference>
<dbReference type="GO" id="GO:0004764">
    <property type="term" value="F:shikimate 3-dehydrogenase (NADP+) activity"/>
    <property type="evidence" value="ECO:0007669"/>
    <property type="project" value="UniProtKB-UniRule"/>
</dbReference>
<dbReference type="GO" id="GO:0008652">
    <property type="term" value="P:amino acid biosynthetic process"/>
    <property type="evidence" value="ECO:0007669"/>
    <property type="project" value="UniProtKB-KW"/>
</dbReference>
<dbReference type="GO" id="GO:0009073">
    <property type="term" value="P:aromatic amino acid family biosynthetic process"/>
    <property type="evidence" value="ECO:0007669"/>
    <property type="project" value="UniProtKB-KW"/>
</dbReference>
<dbReference type="GO" id="GO:0009423">
    <property type="term" value="P:chorismate biosynthetic process"/>
    <property type="evidence" value="ECO:0007669"/>
    <property type="project" value="UniProtKB-UniRule"/>
</dbReference>
<dbReference type="GO" id="GO:0019632">
    <property type="term" value="P:shikimate metabolic process"/>
    <property type="evidence" value="ECO:0007669"/>
    <property type="project" value="InterPro"/>
</dbReference>
<dbReference type="CDD" id="cd01065">
    <property type="entry name" value="NAD_bind_Shikimate_DH"/>
    <property type="match status" value="1"/>
</dbReference>
<dbReference type="Gene3D" id="3.40.50.10860">
    <property type="entry name" value="Leucine Dehydrogenase, chain A, domain 1"/>
    <property type="match status" value="1"/>
</dbReference>
<dbReference type="Gene3D" id="3.40.50.720">
    <property type="entry name" value="NAD(P)-binding Rossmann-like Domain"/>
    <property type="match status" value="1"/>
</dbReference>
<dbReference type="HAMAP" id="MF_00222">
    <property type="entry name" value="Shikimate_DH_AroE"/>
    <property type="match status" value="1"/>
</dbReference>
<dbReference type="InterPro" id="IPR046346">
    <property type="entry name" value="Aminoacid_DH-like_N_sf"/>
</dbReference>
<dbReference type="InterPro" id="IPR036291">
    <property type="entry name" value="NAD(P)-bd_dom_sf"/>
</dbReference>
<dbReference type="InterPro" id="IPR041121">
    <property type="entry name" value="SDH_C"/>
</dbReference>
<dbReference type="InterPro" id="IPR011342">
    <property type="entry name" value="Shikimate_DH"/>
</dbReference>
<dbReference type="InterPro" id="IPR013708">
    <property type="entry name" value="Shikimate_DH-bd_N"/>
</dbReference>
<dbReference type="InterPro" id="IPR022893">
    <property type="entry name" value="Shikimate_DH_fam"/>
</dbReference>
<dbReference type="InterPro" id="IPR006151">
    <property type="entry name" value="Shikm_DH/Glu-tRNA_Rdtase"/>
</dbReference>
<dbReference type="NCBIfam" id="TIGR00507">
    <property type="entry name" value="aroE"/>
    <property type="match status" value="1"/>
</dbReference>
<dbReference type="NCBIfam" id="NF001312">
    <property type="entry name" value="PRK00258.1-4"/>
    <property type="match status" value="1"/>
</dbReference>
<dbReference type="PANTHER" id="PTHR21089:SF1">
    <property type="entry name" value="BIFUNCTIONAL 3-DEHYDROQUINATE DEHYDRATASE_SHIKIMATE DEHYDROGENASE, CHLOROPLASTIC"/>
    <property type="match status" value="1"/>
</dbReference>
<dbReference type="PANTHER" id="PTHR21089">
    <property type="entry name" value="SHIKIMATE DEHYDROGENASE"/>
    <property type="match status" value="1"/>
</dbReference>
<dbReference type="Pfam" id="PF18317">
    <property type="entry name" value="SDH_C"/>
    <property type="match status" value="1"/>
</dbReference>
<dbReference type="Pfam" id="PF01488">
    <property type="entry name" value="Shikimate_DH"/>
    <property type="match status" value="1"/>
</dbReference>
<dbReference type="Pfam" id="PF08501">
    <property type="entry name" value="Shikimate_dh_N"/>
    <property type="match status" value="1"/>
</dbReference>
<dbReference type="SUPFAM" id="SSF53223">
    <property type="entry name" value="Aminoacid dehydrogenase-like, N-terminal domain"/>
    <property type="match status" value="1"/>
</dbReference>
<dbReference type="SUPFAM" id="SSF51735">
    <property type="entry name" value="NAD(P)-binding Rossmann-fold domains"/>
    <property type="match status" value="1"/>
</dbReference>
<organism>
    <name type="scientific">Azorhizobium caulinodans (strain ATCC 43989 / DSM 5975 / JCM 20966 / LMG 6465 / NBRC 14845 / NCIMB 13405 / ORS 571)</name>
    <dbReference type="NCBI Taxonomy" id="438753"/>
    <lineage>
        <taxon>Bacteria</taxon>
        <taxon>Pseudomonadati</taxon>
        <taxon>Pseudomonadota</taxon>
        <taxon>Alphaproteobacteria</taxon>
        <taxon>Hyphomicrobiales</taxon>
        <taxon>Xanthobacteraceae</taxon>
        <taxon>Azorhizobium</taxon>
    </lineage>
</organism>
<accession>A8IFY6</accession>
<gene>
    <name evidence="1" type="primary">aroE</name>
    <name type="ordered locus">AZC_0003</name>
</gene>
<name>AROE_AZOC5</name>